<proteinExistence type="evidence at protein level"/>
<dbReference type="EMBL" id="D82936">
    <property type="protein sequence ID" value="BAA11640.1"/>
    <property type="molecule type" value="Genomic_DNA"/>
</dbReference>
<dbReference type="EMBL" id="BA000022">
    <property type="protein sequence ID" value="BAA18462.1"/>
    <property type="status" value="ALT_INIT"/>
    <property type="molecule type" value="Genomic_DNA"/>
</dbReference>
<dbReference type="PIR" id="S76203">
    <property type="entry name" value="S76203"/>
</dbReference>
<dbReference type="PDB" id="2KMF">
    <property type="method" value="NMR"/>
    <property type="chains" value="A=25-134"/>
</dbReference>
<dbReference type="PDB" id="2KND">
    <property type="method" value="NMR"/>
    <property type="chains" value="A=25-134"/>
</dbReference>
<dbReference type="PDBsum" id="2KMF"/>
<dbReference type="PDBsum" id="2KND"/>
<dbReference type="BMRB" id="P74367"/>
<dbReference type="SMR" id="P74367"/>
<dbReference type="IntAct" id="P74367">
    <property type="interactions" value="7"/>
</dbReference>
<dbReference type="STRING" id="1148.gene:10499339"/>
<dbReference type="PaxDb" id="1148-1653549"/>
<dbReference type="EnsemblBacteria" id="BAA18462">
    <property type="protein sequence ID" value="BAA18462"/>
    <property type="gene ID" value="BAA18462"/>
</dbReference>
<dbReference type="KEGG" id="syn:slr1645"/>
<dbReference type="eggNOG" id="ENOG5031CPI">
    <property type="taxonomic scope" value="Bacteria"/>
</dbReference>
<dbReference type="InParanoid" id="P74367"/>
<dbReference type="PhylomeDB" id="P74367"/>
<dbReference type="EvolutionaryTrace" id="P74367"/>
<dbReference type="Proteomes" id="UP000001425">
    <property type="component" value="Chromosome"/>
</dbReference>
<dbReference type="GO" id="GO:0031676">
    <property type="term" value="C:plasma membrane-derived thylakoid membrane"/>
    <property type="evidence" value="ECO:0007669"/>
    <property type="project" value="UniProtKB-SubCell"/>
</dbReference>
<dbReference type="GO" id="GO:0030096">
    <property type="term" value="C:plasma membrane-derived thylakoid photosystem II"/>
    <property type="evidence" value="ECO:0000314"/>
    <property type="project" value="UniProtKB"/>
</dbReference>
<dbReference type="GO" id="GO:0031977">
    <property type="term" value="C:thylakoid lumen"/>
    <property type="evidence" value="ECO:0007669"/>
    <property type="project" value="UniProtKB-UniRule"/>
</dbReference>
<dbReference type="GO" id="GO:0010207">
    <property type="term" value="P:photosystem II assembly"/>
    <property type="evidence" value="ECO:0000315"/>
    <property type="project" value="UniProtKB"/>
</dbReference>
<dbReference type="GO" id="GO:0010206">
    <property type="term" value="P:photosystem II repair"/>
    <property type="evidence" value="ECO:0000315"/>
    <property type="project" value="UniProtKB"/>
</dbReference>
<dbReference type="FunFam" id="1.20.58.810:FF:000001">
    <property type="entry name" value="Photosystem II lipoprotein Psb27"/>
    <property type="match status" value="1"/>
</dbReference>
<dbReference type="Gene3D" id="1.20.58.810">
    <property type="entry name" value="Photosystem II Pbs27"/>
    <property type="match status" value="1"/>
</dbReference>
<dbReference type="HAMAP" id="MF_01481">
    <property type="entry name" value="PSII_Psb27"/>
    <property type="match status" value="1"/>
</dbReference>
<dbReference type="InterPro" id="IPR025585">
    <property type="entry name" value="PSII_Psb27"/>
</dbReference>
<dbReference type="InterPro" id="IPR017488">
    <property type="entry name" value="PSII_Psb27_cyano_bac"/>
</dbReference>
<dbReference type="InterPro" id="IPR038450">
    <property type="entry name" value="PSII_Psb27_sf"/>
</dbReference>
<dbReference type="NCBIfam" id="TIGR03044">
    <property type="entry name" value="PS_II_psb27"/>
    <property type="match status" value="1"/>
</dbReference>
<dbReference type="PANTHER" id="PTHR34041">
    <property type="entry name" value="PHOTOSYSTEM II REPAIR PROTEIN PSB27-H1, CHLOROPLASTIC"/>
    <property type="match status" value="1"/>
</dbReference>
<dbReference type="PANTHER" id="PTHR34041:SF1">
    <property type="entry name" value="PHOTOSYSTEM II REPAIR PROTEIN PSB27-H1, CHLOROPLASTIC"/>
    <property type="match status" value="1"/>
</dbReference>
<dbReference type="Pfam" id="PF13326">
    <property type="entry name" value="PSII_Pbs27"/>
    <property type="match status" value="1"/>
</dbReference>
<dbReference type="PROSITE" id="PS51257">
    <property type="entry name" value="PROKAR_LIPOPROTEIN"/>
    <property type="match status" value="1"/>
</dbReference>
<comment type="function">
    <text evidence="4 5 6 7 8">Plays a role in the repair and/or biogenesis of the calcium-manganese-oxide cluster on the lumenal face of the thylakoid membrane. Photosystem II (PSII) complexes containing this protein are monomeric, are assembly intermediates lacking the calcium-manganese-oxide cluster and miss some of the lumenal subunits. Probably blocks binding of some of the small lumenal subunits.</text>
</comment>
<comment type="subunit">
    <text evidence="1 2 6 8">Monomer. Forms a complex with a monomeric, partially assembled PSII. This is probably the complex in which D1 is assembled and/or replaced. Present in 6-10% of PSII complexes; mostly in monomeric PSII. These PSII do not evolve oxygen, do not have an assembled calcium-manganese-oxide cluster. Psb27-containing PSII seem to be assembly intermediates; a wild-type strain includes the intrinsic membrane proteins, Psb27, Pbs28, substoichiometric amounts of PsbO and PsbQ but no PsbU or PsbV, while a ctpA deletion mutant includes the intrinsic membrane proteins (D1 as precursor), Psb27, a very low amount of PsbO and PsbQ, but no PsbU or PsbV. Small amounts of Psb27 interact with the lumenal domain of CP43 (psbC) in wild-type and a ctpA mutant. A small amount can also be detected in monomeric and trimeric photosystem I (PSI), possibly via association with PsaB.</text>
</comment>
<comment type="subcellular location">
    <subcellularLocation>
        <location evidence="1 3 6 8">Cellular thylakoid membrane</location>
        <topology evidence="1 3 6 8">Lipid-anchor</topology>
        <orientation evidence="1 3 6 8">Lumenal side</orientation>
    </subcellularLocation>
    <text>Associated with PSII on the lumenal side of the thylakoid membrane.</text>
</comment>
<comment type="disruption phenotype">
    <text evidence="4 5 8">Not essential for photoautotrophic growth, under CaCl(2) limiting-conditions absolutely required. Impaired recovery after photoinhibition due to impaired assembly of the calcium-manganese-oxide cluster, especially at high light intensities. CP43 (psbC) is more susceptible to degradation, higher turnover of D1 (psbA). Calcium-manganese-oxide cluster assembly is improved in a double psbO-psb27 mutant. A double psbM-psb27 mutant is incapable of photoautotrophic growth, but does assemble the CP43-less assembly intermediate.</text>
</comment>
<comment type="similarity">
    <text evidence="1">Belongs to the Psb27 family.</text>
</comment>
<comment type="sequence caution" evidence="10">
    <conflict type="erroneous initiation">
        <sequence resource="EMBL-CDS" id="BAA18462"/>
    </conflict>
    <text>Extended N-terminus.</text>
</comment>
<keyword id="KW-0002">3D-structure</keyword>
<keyword id="KW-0903">Direct protein sequencing</keyword>
<keyword id="KW-0449">Lipoprotein</keyword>
<keyword id="KW-0472">Membrane</keyword>
<keyword id="KW-0564">Palmitate</keyword>
<keyword id="KW-0602">Photosynthesis</keyword>
<keyword id="KW-0604">Photosystem II</keyword>
<keyword id="KW-1185">Reference proteome</keyword>
<keyword id="KW-0732">Signal</keyword>
<keyword id="KW-0793">Thylakoid</keyword>
<sequence length="134" mass="14786">MSFLKNQLSRLLALILVVAIGLTACDSGTGLTGNYSQDTLTVIATLREAIDLPQDAPNRQEVQDTARGQINDYISRYRRKGDAGGLKSFTTMQTALNSLAGYYTSYGARPIPEKLKKRLQLEFTQAERSIERGV</sequence>
<reference key="1">
    <citation type="submission" date="1996-01" db="EMBL/GenBank/DDBJ databases">
        <title>Cloning of genes for the 11 kDa and 13 kDa proteins of photosystem II from Synechocystis sp. PCC 6803.</title>
        <authorList>
            <person name="Ikeuchi M."/>
            <person name="Katoh H."/>
        </authorList>
    </citation>
    <scope>NUCLEOTIDE SEQUENCE [GENOMIC DNA]</scope>
</reference>
<reference key="2">
    <citation type="journal article" date="1996" name="DNA Res.">
        <title>Sequence analysis of the genome of the unicellular cyanobacterium Synechocystis sp. strain PCC6803. II. Sequence determination of the entire genome and assignment of potential protein-coding regions.</title>
        <authorList>
            <person name="Kaneko T."/>
            <person name="Sato S."/>
            <person name="Kotani H."/>
            <person name="Tanaka A."/>
            <person name="Asamizu E."/>
            <person name="Nakamura Y."/>
            <person name="Miyajima N."/>
            <person name="Hirosawa M."/>
            <person name="Sugiura M."/>
            <person name="Sasamoto S."/>
            <person name="Kimura T."/>
            <person name="Hosouchi T."/>
            <person name="Matsuno A."/>
            <person name="Muraki A."/>
            <person name="Nakazaki N."/>
            <person name="Naruo K."/>
            <person name="Okumura S."/>
            <person name="Shimpo S."/>
            <person name="Takeuchi C."/>
            <person name="Wada T."/>
            <person name="Watanabe A."/>
            <person name="Yamada M."/>
            <person name="Yasuda M."/>
            <person name="Tabata S."/>
        </authorList>
    </citation>
    <scope>NUCLEOTIDE SEQUENCE [LARGE SCALE GENOMIC DNA]</scope>
    <source>
        <strain>ATCC 27184 / PCC 6803 / Kazusa</strain>
    </source>
</reference>
<reference key="3">
    <citation type="journal article" date="2011" name="Proc. Natl. Acad. Sci. U.S.A.">
        <title>Psb27, a transiently associated protein, binds to the chlorophyll binding protein CP43 in photosystem II assembly intermediates.</title>
        <authorList>
            <person name="Liu H."/>
            <person name="Huang R.Y."/>
            <person name="Chen J."/>
            <person name="Gross M.L."/>
            <person name="Pakrasi H.B."/>
        </authorList>
    </citation>
    <scope>PROTEIN SEQUENCE OF 79-87</scope>
    <scope>FUNCTION</scope>
    <scope>INTERACTION WITH PSBC</scope>
    <source>
        <strain>ATCC 27184 / PCC 6803 / Kazusa</strain>
    </source>
</reference>
<reference key="4">
    <citation type="journal article" date="2002" name="Biochemistry">
        <title>Proteomic analysis of a highly active photosystem II preparation from the cyanobacterium Synechocystis sp. PCC 6803 reveals the presence of novel polypeptides.</title>
        <authorList>
            <person name="Kashino Y."/>
            <person name="Lauber W.M."/>
            <person name="Carroll J.A."/>
            <person name="Wang Q."/>
            <person name="Whitmarsh J."/>
            <person name="Satoh K."/>
            <person name="Pakrasi H.B."/>
        </authorList>
    </citation>
    <scope>IDENTIFICATION BY MASS SPECTROMETRY</scope>
    <scope>GENE NAME</scope>
    <scope>SUBUNIT</scope>
    <scope>SUBCELLULAR LOCATION</scope>
    <source>
        <strain>ATCC 27184 / PCC 6803 / Kazusa</strain>
    </source>
</reference>
<reference key="5">
    <citation type="journal article" date="2004" name="J. Biol. Chem.">
        <title>Evidence that D1 processing is required for manganese binding and extrinsic protein assembly into photosystem II.</title>
        <authorList>
            <person name="Roose J.L."/>
            <person name="Pakrasi H.B."/>
        </authorList>
    </citation>
    <scope>SUBCELLULAR LOCATION</scope>
    <source>
        <strain>ATCC 27184 / PCC 6803 / Kazusa</strain>
    </source>
</reference>
<reference key="6">
    <citation type="journal article" date="2008" name="Biochemistry">
        <title>Effects of inactivating psbM and psbT on photodamage and assembly of photosystem II in Synechocystis sp. PCC 6803.</title>
        <authorList>
            <person name="Bentley F.K."/>
            <person name="Luo H."/>
            <person name="Dilbeck P."/>
            <person name="Burnap R.L."/>
            <person name="Eaton-Rye J.J."/>
        </authorList>
    </citation>
    <scope>FUNCTION</scope>
    <scope>DISRUPTION PHENOTYPE</scope>
    <source>
        <strain>ATCC 27184 / PCC 6803 / Kazusa</strain>
    </source>
</reference>
<reference key="7">
    <citation type="journal article" date="2008" name="J. Biol. Chem.">
        <title>The Psb27 protein facilitates manganese cluster assembly in photosystem II.</title>
        <authorList>
            <person name="Roose J.L."/>
            <person name="Pakrasi H.B."/>
        </authorList>
    </citation>
    <scope>FUNCTION</scope>
    <scope>DISRUPTION PHENOTYPE</scope>
    <source>
        <strain>ATCC 27184 / PCC 6803 / Kazusa</strain>
    </source>
</reference>
<reference key="8">
    <citation type="journal article" date="2011" name="J. Biol. Chem.">
        <title>A genetically tagged Psb27 protein allows purification of two consecutive photosystem II (PSII) assembly intermediates in Synechocystis 6803, a cyanobacterium.</title>
        <authorList>
            <person name="Liu H."/>
            <person name="Roose J.L."/>
            <person name="Cameron J.C."/>
            <person name="Pakrasi H.B."/>
        </authorList>
    </citation>
    <scope>FUNCTION</scope>
    <scope>SUBUNIT</scope>
    <scope>SUBCELLULAR LOCATION</scope>
    <source>
        <strain>ATCC 27184 / PCC 6803 / Kazusa</strain>
    </source>
</reference>
<reference key="9">
    <citation type="journal article" date="2012" name="Plant Physiol.">
        <title>The Psb27 assembly factor binds to the CP43 complex of photosystem II in the cyanobacterium Synechocystis sp. PCC 6803.</title>
        <authorList>
            <person name="Komenda J."/>
            <person name="Knoppova J."/>
            <person name="Kopecna J."/>
            <person name="Sobotka R."/>
            <person name="Halada P."/>
            <person name="Yu J."/>
            <person name="Nickelsen J."/>
            <person name="Boehm M."/>
            <person name="Nixon P.J."/>
        </authorList>
    </citation>
    <scope>FUNCTION</scope>
    <scope>SUBUNIT</scope>
    <scope>INTERACTION WITH PSBC</scope>
    <scope>CHARACTERIZATION AS A LIPOPROTEIN</scope>
    <scope>SUBCELLULAR LOCATION</scope>
    <scope>DISRUPTION PHENOTYPE</scope>
    <source>
        <strain>ATCC 27184 / PCC 6803 / Kazusa</strain>
    </source>
</reference>
<reference key="10">
    <citation type="journal article" date="2009" name="Biochemistry">
        <title>Structure of Psb27 in solution: implications for transient binding to photosystem II during biogenesis and repair.</title>
        <authorList>
            <person name="Cormann K.U."/>
            <person name="Bangert J.A."/>
            <person name="Ikeuchi M."/>
            <person name="Rogner M."/>
            <person name="Stoll R."/>
            <person name="Nowaczyk M.M."/>
        </authorList>
    </citation>
    <scope>STRUCTURE BY NMR OF 25-134</scope>
    <source>
        <strain>ATCC 27184 / PCC 6803 / Kazusa</strain>
    </source>
</reference>
<reference key="11">
    <citation type="journal article" date="2009" name="Biochemistry">
        <title>Solution structure of Psb27 from cyanobacterial photosystem II.</title>
        <authorList>
            <person name="Mabbitt P.D."/>
            <person name="Rautureau G.J."/>
            <person name="Day C.L."/>
            <person name="Wilbanks S.M."/>
            <person name="Eaton-Rye J.J."/>
            <person name="Hinds M.G."/>
        </authorList>
    </citation>
    <scope>STRUCTURE BY NMR OF 25-134</scope>
    <source>
        <strain>ATCC 27184 / PCC 6803 / Kazusa</strain>
    </source>
</reference>
<evidence type="ECO:0000255" key="1">
    <source>
        <dbReference type="HAMAP-Rule" id="MF_01481"/>
    </source>
</evidence>
<evidence type="ECO:0000269" key="2">
    <source>
    </source>
</evidence>
<evidence type="ECO:0000269" key="3">
    <source>
    </source>
</evidence>
<evidence type="ECO:0000269" key="4">
    <source>
    </source>
</evidence>
<evidence type="ECO:0000269" key="5">
    <source>
    </source>
</evidence>
<evidence type="ECO:0000269" key="6">
    <source>
    </source>
</evidence>
<evidence type="ECO:0000269" key="7">
    <source>
    </source>
</evidence>
<evidence type="ECO:0000269" key="8">
    <source>
    </source>
</evidence>
<evidence type="ECO:0000303" key="9">
    <source>
    </source>
</evidence>
<evidence type="ECO:0000305" key="10"/>
<evidence type="ECO:0007829" key="11">
    <source>
        <dbReference type="PDB" id="2KMF"/>
    </source>
</evidence>
<accession>P74367</accession>
<accession>Q55355</accession>
<gene>
    <name evidence="1 9" type="primary">psb27</name>
    <name type="ordered locus">slr1645</name>
</gene>
<name>PSB27_SYNY3</name>
<feature type="signal peptide">
    <location>
        <begin position="1"/>
        <end position="24"/>
    </location>
</feature>
<feature type="chain" id="PRO_0000029369" description="Photosystem II lipoprotein Psb27">
    <location>
        <begin position="25"/>
        <end position="134"/>
    </location>
</feature>
<feature type="lipid moiety-binding region" description="N-palmitoyl cysteine" evidence="10">
    <location>
        <position position="25"/>
    </location>
</feature>
<feature type="lipid moiety-binding region" description="S-diacylglycerol cysteine" evidence="1">
    <location>
        <position position="25"/>
    </location>
</feature>
<feature type="helix" evidence="11">
    <location>
        <begin position="35"/>
        <end position="51"/>
    </location>
</feature>
<feature type="helix" evidence="11">
    <location>
        <begin position="59"/>
        <end position="76"/>
    </location>
</feature>
<feature type="helix" evidence="11">
    <location>
        <begin position="78"/>
        <end position="81"/>
    </location>
</feature>
<feature type="strand" evidence="11">
    <location>
        <begin position="83"/>
        <end position="85"/>
    </location>
</feature>
<feature type="helix" evidence="11">
    <location>
        <begin position="87"/>
        <end position="106"/>
    </location>
</feature>
<feature type="helix" evidence="11">
    <location>
        <begin position="113"/>
        <end position="132"/>
    </location>
</feature>
<organism>
    <name type="scientific">Synechocystis sp. (strain ATCC 27184 / PCC 6803 / Kazusa)</name>
    <dbReference type="NCBI Taxonomy" id="1111708"/>
    <lineage>
        <taxon>Bacteria</taxon>
        <taxon>Bacillati</taxon>
        <taxon>Cyanobacteriota</taxon>
        <taxon>Cyanophyceae</taxon>
        <taxon>Synechococcales</taxon>
        <taxon>Merismopediaceae</taxon>
        <taxon>Synechocystis</taxon>
    </lineage>
</organism>
<protein>
    <recommendedName>
        <fullName evidence="1 9">Photosystem II lipoprotein Psb27</fullName>
    </recommendedName>
    <alternativeName>
        <fullName evidence="1">Photosystem II 11 kDa protein</fullName>
    </alternativeName>
</protein>